<protein>
    <recommendedName>
        <fullName>Coiled-coil alpha-helical rod protein 1</fullName>
    </recommendedName>
    <alternativeName>
        <fullName>Alpha-helical coiled-coil rod protein</fullName>
    </alternativeName>
</protein>
<keyword id="KW-0175">Coiled coil</keyword>
<keyword id="KW-0963">Cytoplasm</keyword>
<keyword id="KW-0217">Developmental protein</keyword>
<keyword id="KW-0221">Differentiation</keyword>
<keyword id="KW-0539">Nucleus</keyword>
<keyword id="KW-1185">Reference proteome</keyword>
<sequence>MFPPSGSTGLIPPSHFQARPLSTLPRMAPTWLSDIPLVQPPGHQDVSERQLDTQRPQVTMWERDVSSDRQEPGRRGRSWGLEGSQALSQQAEVIARQLQELRRLEEEVRLLRETSLQQKMRLEAQAMELEALARAEKAGRAEAEGLRAALAGAEVVRKNLEEGSQRELEEVQRLHQEQLSSLTQAHKEALSSLTSKAEGLEKSLSSLETRRAGEAKELAEAQREAELLRKQLSKTQEDLEAQVTLVENLRKYVGEQVPSEVHSQTWELERQKLLETMQHLQEDRDSLQATAELLQVRVQSLTHILALQEEELTRKVQPSDSLEPEFTRKCQSLLNRWREKVFALMVQLKAQELEHSDSVKQLKGQVASLQEKVTSQSQEQAILQQSLQDKAAEVEVERMGAKGLQLELSRAQEARCRWQQQTASAEEQLRLVVNAVSSSQIWLETTMAKVEGAAAQLPSLNNRLSYAVRKVHTIRGLIAQKLALAQLRQESCPLPPPVTDVSLELQQLREERNRLDAELQLSARLIQQEVGRAREQGEAERQQLSKVAQQLEQELQQTQESLASLGLQLEVARQGQQESTEEAASLRQELTQQQELYGQALQEKVAEVETRLREQLSDTERRLNEARREHAKAVVSLRQIQRRAAQEKERSQELRRLQEEARKEEGQRLARRLQELERDKNLMLATLQQEGLLSRYKQQRLLTVLPSLLDKKKSVVSSPRPPECSASASVAAAVPTRESIKGSLSVLLDDLQGLSEAISKEEAVCQGDNLDRCSSSNPQMSS</sequence>
<gene>
    <name type="primary">CCHCR1</name>
    <name type="synonym">HCR</name>
</gene>
<proteinExistence type="inferred from homology"/>
<reference key="1">
    <citation type="submission" date="2002-07" db="EMBL/GenBank/DDBJ databases">
        <title>HCR gene orthologs in chimpanzee, pygmy chimpanzee, gorilla, and orangutan.</title>
        <authorList>
            <person name="Asumalahti K."/>
            <person name="Kere J."/>
        </authorList>
    </citation>
    <scope>NUCLEOTIDE SEQUENCE [GENOMIC DNA]</scope>
</reference>
<name>CCHCR_GORGO</name>
<accession>Q8HZ59</accession>
<dbReference type="EMBL" id="AY135795">
    <property type="protein sequence ID" value="AAN12280.1"/>
    <property type="molecule type" value="Genomic_DNA"/>
</dbReference>
<dbReference type="EMBL" id="AY135779">
    <property type="protein sequence ID" value="AAN12280.1"/>
    <property type="status" value="JOINED"/>
    <property type="molecule type" value="Genomic_DNA"/>
</dbReference>
<dbReference type="EMBL" id="AY135780">
    <property type="protein sequence ID" value="AAN12280.1"/>
    <property type="status" value="JOINED"/>
    <property type="molecule type" value="Genomic_DNA"/>
</dbReference>
<dbReference type="EMBL" id="AY135781">
    <property type="protein sequence ID" value="AAN12280.1"/>
    <property type="status" value="JOINED"/>
    <property type="molecule type" value="Genomic_DNA"/>
</dbReference>
<dbReference type="EMBL" id="AY135782">
    <property type="protein sequence ID" value="AAN12280.1"/>
    <property type="status" value="JOINED"/>
    <property type="molecule type" value="Genomic_DNA"/>
</dbReference>
<dbReference type="EMBL" id="AY135783">
    <property type="protein sequence ID" value="AAN12280.1"/>
    <property type="status" value="JOINED"/>
    <property type="molecule type" value="Genomic_DNA"/>
</dbReference>
<dbReference type="EMBL" id="AY135784">
    <property type="protein sequence ID" value="AAN12280.1"/>
    <property type="status" value="JOINED"/>
    <property type="molecule type" value="Genomic_DNA"/>
</dbReference>
<dbReference type="EMBL" id="AY135785">
    <property type="protein sequence ID" value="AAN12280.1"/>
    <property type="status" value="JOINED"/>
    <property type="molecule type" value="Genomic_DNA"/>
</dbReference>
<dbReference type="EMBL" id="AY135786">
    <property type="protein sequence ID" value="AAN12280.1"/>
    <property type="status" value="JOINED"/>
    <property type="molecule type" value="Genomic_DNA"/>
</dbReference>
<dbReference type="EMBL" id="AY135787">
    <property type="protein sequence ID" value="AAN12280.1"/>
    <property type="status" value="JOINED"/>
    <property type="molecule type" value="Genomic_DNA"/>
</dbReference>
<dbReference type="EMBL" id="AY135788">
    <property type="protein sequence ID" value="AAN12280.1"/>
    <property type="status" value="JOINED"/>
    <property type="molecule type" value="Genomic_DNA"/>
</dbReference>
<dbReference type="EMBL" id="AY135789">
    <property type="protein sequence ID" value="AAN12280.1"/>
    <property type="status" value="JOINED"/>
    <property type="molecule type" value="Genomic_DNA"/>
</dbReference>
<dbReference type="EMBL" id="AY135790">
    <property type="protein sequence ID" value="AAN12280.1"/>
    <property type="status" value="JOINED"/>
    <property type="molecule type" value="Genomic_DNA"/>
</dbReference>
<dbReference type="EMBL" id="AY135791">
    <property type="protein sequence ID" value="AAN12280.1"/>
    <property type="status" value="JOINED"/>
    <property type="molecule type" value="Genomic_DNA"/>
</dbReference>
<dbReference type="EMBL" id="AY135792">
    <property type="protein sequence ID" value="AAN12280.1"/>
    <property type="status" value="JOINED"/>
    <property type="molecule type" value="Genomic_DNA"/>
</dbReference>
<dbReference type="EMBL" id="AY135793">
    <property type="protein sequence ID" value="AAN12280.1"/>
    <property type="status" value="JOINED"/>
    <property type="molecule type" value="Genomic_DNA"/>
</dbReference>
<dbReference type="EMBL" id="AY135794">
    <property type="protein sequence ID" value="AAN12280.1"/>
    <property type="status" value="JOINED"/>
    <property type="molecule type" value="Genomic_DNA"/>
</dbReference>
<dbReference type="SMR" id="Q8HZ59"/>
<dbReference type="FunCoup" id="Q8HZ59">
    <property type="interactions" value="642"/>
</dbReference>
<dbReference type="STRING" id="9593.ENSGGOP00000010913"/>
<dbReference type="eggNOG" id="KOG3802">
    <property type="taxonomic scope" value="Eukaryota"/>
</dbReference>
<dbReference type="InParanoid" id="Q8HZ59"/>
<dbReference type="Proteomes" id="UP000001519">
    <property type="component" value="Unplaced"/>
</dbReference>
<dbReference type="GO" id="GO:0005814">
    <property type="term" value="C:centriole"/>
    <property type="evidence" value="ECO:0000250"/>
    <property type="project" value="UniProtKB"/>
</dbReference>
<dbReference type="GO" id="GO:0005737">
    <property type="term" value="C:cytoplasm"/>
    <property type="evidence" value="ECO:0007669"/>
    <property type="project" value="UniProtKB-SubCell"/>
</dbReference>
<dbReference type="GO" id="GO:0005634">
    <property type="term" value="C:nucleus"/>
    <property type="evidence" value="ECO:0007669"/>
    <property type="project" value="UniProtKB-SubCell"/>
</dbReference>
<dbReference type="GO" id="GO:0030154">
    <property type="term" value="P:cell differentiation"/>
    <property type="evidence" value="ECO:0007669"/>
    <property type="project" value="UniProtKB-KW"/>
</dbReference>
<dbReference type="GO" id="GO:0006611">
    <property type="term" value="P:protein export from nucleus"/>
    <property type="evidence" value="ECO:0000318"/>
    <property type="project" value="GO_Central"/>
</dbReference>
<dbReference type="InterPro" id="IPR009800">
    <property type="entry name" value="HCR"/>
</dbReference>
<dbReference type="PANTHER" id="PTHR46822">
    <property type="entry name" value="COILED-COIL ALPHA-HELICAL ROD PROTEIN 1"/>
    <property type="match status" value="1"/>
</dbReference>
<dbReference type="PANTHER" id="PTHR46822:SF1">
    <property type="entry name" value="COILED-COIL ALPHA-HELICAL ROD PROTEIN 1"/>
    <property type="match status" value="1"/>
</dbReference>
<dbReference type="Pfam" id="PF07111">
    <property type="entry name" value="HCR"/>
    <property type="match status" value="1"/>
</dbReference>
<organism>
    <name type="scientific">Gorilla gorilla gorilla</name>
    <name type="common">Western lowland gorilla</name>
    <dbReference type="NCBI Taxonomy" id="9595"/>
    <lineage>
        <taxon>Eukaryota</taxon>
        <taxon>Metazoa</taxon>
        <taxon>Chordata</taxon>
        <taxon>Craniata</taxon>
        <taxon>Vertebrata</taxon>
        <taxon>Euteleostomi</taxon>
        <taxon>Mammalia</taxon>
        <taxon>Eutheria</taxon>
        <taxon>Euarchontoglires</taxon>
        <taxon>Primates</taxon>
        <taxon>Haplorrhini</taxon>
        <taxon>Catarrhini</taxon>
        <taxon>Hominidae</taxon>
        <taxon>Gorilla</taxon>
    </lineage>
</organism>
<feature type="chain" id="PRO_0000089415" description="Coiled-coil alpha-helical rod protein 1">
    <location>
        <begin position="1"/>
        <end position="782"/>
    </location>
</feature>
<feature type="region of interest" description="Disordered" evidence="3">
    <location>
        <begin position="62"/>
        <end position="82"/>
    </location>
</feature>
<feature type="region of interest" description="Disordered" evidence="3">
    <location>
        <begin position="185"/>
        <end position="218"/>
    </location>
</feature>
<feature type="coiled-coil region" evidence="2">
    <location>
        <begin position="82"/>
        <end position="314"/>
    </location>
</feature>
<feature type="coiled-coil region" evidence="2">
    <location>
        <begin position="344"/>
        <end position="398"/>
    </location>
</feature>
<feature type="coiled-coil region" evidence="2">
    <location>
        <begin position="498"/>
        <end position="691"/>
    </location>
</feature>
<feature type="compositionally biased region" description="Basic and acidic residues" evidence="3">
    <location>
        <begin position="62"/>
        <end position="74"/>
    </location>
</feature>
<feature type="compositionally biased region" description="Basic and acidic residues" evidence="3">
    <location>
        <begin position="208"/>
        <end position="218"/>
    </location>
</feature>
<evidence type="ECO:0000250" key="1"/>
<evidence type="ECO:0000255" key="2"/>
<evidence type="ECO:0000256" key="3">
    <source>
        <dbReference type="SAM" id="MobiDB-lite"/>
    </source>
</evidence>
<comment type="function">
    <text evidence="1">May be a regulator of keratinocyte proliferation or differentiation.</text>
</comment>
<comment type="subcellular location">
    <subcellularLocation>
        <location evidence="1">Cytoplasm</location>
    </subcellularLocation>
    <subcellularLocation>
        <location evidence="1">Nucleus</location>
    </subcellularLocation>
</comment>